<proteinExistence type="inferred from homology"/>
<name>EBFC_BORRA</name>
<feature type="chain" id="PRO_1000114587" description="Nucleoid-associated protein EbfC">
    <location>
        <begin position="1"/>
        <end position="99"/>
    </location>
</feature>
<organism>
    <name type="scientific">Borrelia recurrentis (strain A1)</name>
    <dbReference type="NCBI Taxonomy" id="412418"/>
    <lineage>
        <taxon>Bacteria</taxon>
        <taxon>Pseudomonadati</taxon>
        <taxon>Spirochaetota</taxon>
        <taxon>Spirochaetia</taxon>
        <taxon>Spirochaetales</taxon>
        <taxon>Borreliaceae</taxon>
        <taxon>Borrelia</taxon>
    </lineage>
</organism>
<sequence length="99" mass="11141">MAVNPLDFLKNMSNFKDNIDNIKKEISQIVVCGRAGSDVVVVEMNGEFVVKKILIKEDFFNDLDNEALEHMIKSAFNDAVFKVKEEIKSKTMGSIPFGI</sequence>
<comment type="function">
    <text evidence="1">Binds to DNA and alters its conformation. May be involved in regulation of gene expression, nucleoid organization and DNA protection.</text>
</comment>
<comment type="subunit">
    <text evidence="1">Homodimer.</text>
</comment>
<comment type="subcellular location">
    <subcellularLocation>
        <location evidence="1">Cytoplasm</location>
        <location evidence="1">Nucleoid</location>
    </subcellularLocation>
</comment>
<comment type="similarity">
    <text evidence="1">Belongs to the YbaB/EbfC family.</text>
</comment>
<dbReference type="EMBL" id="CP000993">
    <property type="protein sequence ID" value="ACH94699.1"/>
    <property type="molecule type" value="Genomic_DNA"/>
</dbReference>
<dbReference type="RefSeq" id="WP_012538216.1">
    <property type="nucleotide sequence ID" value="NZ_CP169983.1"/>
</dbReference>
<dbReference type="SMR" id="B5RRR5"/>
<dbReference type="KEGG" id="bre:BRE_467"/>
<dbReference type="HOGENOM" id="CLU_140930_4_1_12"/>
<dbReference type="Proteomes" id="UP000000612">
    <property type="component" value="Chromosome"/>
</dbReference>
<dbReference type="GO" id="GO:0043590">
    <property type="term" value="C:bacterial nucleoid"/>
    <property type="evidence" value="ECO:0007669"/>
    <property type="project" value="UniProtKB-UniRule"/>
</dbReference>
<dbReference type="GO" id="GO:0005737">
    <property type="term" value="C:cytoplasm"/>
    <property type="evidence" value="ECO:0007669"/>
    <property type="project" value="UniProtKB-UniRule"/>
</dbReference>
<dbReference type="GO" id="GO:0003677">
    <property type="term" value="F:DNA binding"/>
    <property type="evidence" value="ECO:0007669"/>
    <property type="project" value="UniProtKB-UniRule"/>
</dbReference>
<dbReference type="Gene3D" id="3.30.1310.10">
    <property type="entry name" value="Nucleoid-associated protein YbaB-like domain"/>
    <property type="match status" value="1"/>
</dbReference>
<dbReference type="HAMAP" id="MF_00274">
    <property type="entry name" value="DNA_YbaB_EbfC"/>
    <property type="match status" value="1"/>
</dbReference>
<dbReference type="InterPro" id="IPR036894">
    <property type="entry name" value="YbaB-like_sf"/>
</dbReference>
<dbReference type="InterPro" id="IPR004401">
    <property type="entry name" value="YbaB/EbfC"/>
</dbReference>
<dbReference type="NCBIfam" id="TIGR00103">
    <property type="entry name" value="DNA_YbaB_EbfC"/>
    <property type="match status" value="1"/>
</dbReference>
<dbReference type="Pfam" id="PF02575">
    <property type="entry name" value="YbaB_DNA_bd"/>
    <property type="match status" value="1"/>
</dbReference>
<dbReference type="PIRSF" id="PIRSF004555">
    <property type="entry name" value="UCP004555"/>
    <property type="match status" value="1"/>
</dbReference>
<dbReference type="SUPFAM" id="SSF82607">
    <property type="entry name" value="YbaB-like"/>
    <property type="match status" value="1"/>
</dbReference>
<accession>B5RRR5</accession>
<gene>
    <name evidence="1" type="primary">ebfC</name>
    <name type="ordered locus">BRE_467</name>
</gene>
<protein>
    <recommendedName>
        <fullName evidence="1">Nucleoid-associated protein EbfC</fullName>
    </recommendedName>
</protein>
<reference key="1">
    <citation type="journal article" date="2008" name="PLoS Genet.">
        <title>The genome of Borrelia recurrentis, the agent of deadly louse-borne relapsing fever, is a degraded subset of tick-borne Borrelia duttonii.</title>
        <authorList>
            <person name="Lescot M."/>
            <person name="Audic S."/>
            <person name="Robert C."/>
            <person name="Nguyen T.T."/>
            <person name="Blanc G."/>
            <person name="Cutler S.J."/>
            <person name="Wincker P."/>
            <person name="Couloux A."/>
            <person name="Claverie J.-M."/>
            <person name="Raoult D."/>
            <person name="Drancourt M."/>
        </authorList>
    </citation>
    <scope>NUCLEOTIDE SEQUENCE [LARGE SCALE GENOMIC DNA]</scope>
    <source>
        <strain>A1</strain>
    </source>
</reference>
<evidence type="ECO:0000255" key="1">
    <source>
        <dbReference type="HAMAP-Rule" id="MF_00274"/>
    </source>
</evidence>
<keyword id="KW-0963">Cytoplasm</keyword>
<keyword id="KW-0238">DNA-binding</keyword>